<comment type="function">
    <text evidence="1">Involved in the gluconeogenesis. Catalyzes the conversion of oxaloacetate (OAA) to phosphoenolpyruvate (PEP) through direct phosphoryl transfer between the nucleoside triphosphate and OAA.</text>
</comment>
<comment type="catalytic activity">
    <reaction evidence="1">
        <text>oxaloacetate + ATP = phosphoenolpyruvate + ADP + CO2</text>
        <dbReference type="Rhea" id="RHEA:18617"/>
        <dbReference type="ChEBI" id="CHEBI:16452"/>
        <dbReference type="ChEBI" id="CHEBI:16526"/>
        <dbReference type="ChEBI" id="CHEBI:30616"/>
        <dbReference type="ChEBI" id="CHEBI:58702"/>
        <dbReference type="ChEBI" id="CHEBI:456216"/>
        <dbReference type="EC" id="4.1.1.49"/>
    </reaction>
</comment>
<comment type="cofactor">
    <cofactor evidence="1">
        <name>Mn(2+)</name>
        <dbReference type="ChEBI" id="CHEBI:29035"/>
    </cofactor>
    <text evidence="1">Binds 1 Mn(2+) ion per subunit.</text>
</comment>
<comment type="pathway">
    <text evidence="1">Carbohydrate biosynthesis; gluconeogenesis.</text>
</comment>
<comment type="subcellular location">
    <subcellularLocation>
        <location evidence="1">Cytoplasm</location>
    </subcellularLocation>
</comment>
<comment type="similarity">
    <text evidence="1">Belongs to the phosphoenolpyruvate carboxykinase (ATP) family.</text>
</comment>
<keyword id="KW-0067">ATP-binding</keyword>
<keyword id="KW-0963">Cytoplasm</keyword>
<keyword id="KW-0210">Decarboxylase</keyword>
<keyword id="KW-0312">Gluconeogenesis</keyword>
<keyword id="KW-0456">Lyase</keyword>
<keyword id="KW-0464">Manganese</keyword>
<keyword id="KW-0479">Metal-binding</keyword>
<keyword id="KW-0547">Nucleotide-binding</keyword>
<dbReference type="EC" id="4.1.1.49" evidence="1"/>
<dbReference type="EMBL" id="CP000255">
    <property type="protein sequence ID" value="ABD22644.1"/>
    <property type="molecule type" value="Genomic_DNA"/>
</dbReference>
<dbReference type="RefSeq" id="WP_000109906.1">
    <property type="nucleotide sequence ID" value="NZ_CP027476.1"/>
</dbReference>
<dbReference type="SMR" id="Q2FFV5"/>
<dbReference type="KEGG" id="saa:SAUSA300_1731"/>
<dbReference type="HOGENOM" id="CLU_018247_0_1_9"/>
<dbReference type="OMA" id="MRYAGEM"/>
<dbReference type="UniPathway" id="UPA00138"/>
<dbReference type="Proteomes" id="UP000001939">
    <property type="component" value="Chromosome"/>
</dbReference>
<dbReference type="GO" id="GO:0005829">
    <property type="term" value="C:cytosol"/>
    <property type="evidence" value="ECO:0007669"/>
    <property type="project" value="TreeGrafter"/>
</dbReference>
<dbReference type="GO" id="GO:0005524">
    <property type="term" value="F:ATP binding"/>
    <property type="evidence" value="ECO:0007669"/>
    <property type="project" value="UniProtKB-UniRule"/>
</dbReference>
<dbReference type="GO" id="GO:0046872">
    <property type="term" value="F:metal ion binding"/>
    <property type="evidence" value="ECO:0007669"/>
    <property type="project" value="UniProtKB-KW"/>
</dbReference>
<dbReference type="GO" id="GO:0004612">
    <property type="term" value="F:phosphoenolpyruvate carboxykinase (ATP) activity"/>
    <property type="evidence" value="ECO:0007669"/>
    <property type="project" value="UniProtKB-UniRule"/>
</dbReference>
<dbReference type="GO" id="GO:0006094">
    <property type="term" value="P:gluconeogenesis"/>
    <property type="evidence" value="ECO:0007669"/>
    <property type="project" value="UniProtKB-UniRule"/>
</dbReference>
<dbReference type="CDD" id="cd00484">
    <property type="entry name" value="PEPCK_ATP"/>
    <property type="match status" value="1"/>
</dbReference>
<dbReference type="FunFam" id="2.170.8.10:FF:000001">
    <property type="entry name" value="Phosphoenolpyruvate carboxykinase (ATP)"/>
    <property type="match status" value="1"/>
</dbReference>
<dbReference type="FunFam" id="3.40.449.10:FF:000001">
    <property type="entry name" value="Phosphoenolpyruvate carboxykinase (ATP)"/>
    <property type="match status" value="1"/>
</dbReference>
<dbReference type="Gene3D" id="3.90.228.20">
    <property type="match status" value="1"/>
</dbReference>
<dbReference type="Gene3D" id="3.40.449.10">
    <property type="entry name" value="Phosphoenolpyruvate Carboxykinase, domain 1"/>
    <property type="match status" value="1"/>
</dbReference>
<dbReference type="Gene3D" id="2.170.8.10">
    <property type="entry name" value="Phosphoenolpyruvate Carboxykinase, domain 2"/>
    <property type="match status" value="1"/>
</dbReference>
<dbReference type="HAMAP" id="MF_00453">
    <property type="entry name" value="PEPCK_ATP"/>
    <property type="match status" value="1"/>
</dbReference>
<dbReference type="InterPro" id="IPR001272">
    <property type="entry name" value="PEP_carboxykinase_ATP"/>
</dbReference>
<dbReference type="InterPro" id="IPR013035">
    <property type="entry name" value="PEP_carboxykinase_C"/>
</dbReference>
<dbReference type="InterPro" id="IPR008210">
    <property type="entry name" value="PEP_carboxykinase_N"/>
</dbReference>
<dbReference type="InterPro" id="IPR015994">
    <property type="entry name" value="PEPCK_ATP_CS"/>
</dbReference>
<dbReference type="NCBIfam" id="TIGR00224">
    <property type="entry name" value="pckA"/>
    <property type="match status" value="1"/>
</dbReference>
<dbReference type="NCBIfam" id="NF006820">
    <property type="entry name" value="PRK09344.1-2"/>
    <property type="match status" value="1"/>
</dbReference>
<dbReference type="NCBIfam" id="NF006821">
    <property type="entry name" value="PRK09344.1-3"/>
    <property type="match status" value="1"/>
</dbReference>
<dbReference type="PANTHER" id="PTHR30031:SF0">
    <property type="entry name" value="PHOSPHOENOLPYRUVATE CARBOXYKINASE (ATP)"/>
    <property type="match status" value="1"/>
</dbReference>
<dbReference type="PANTHER" id="PTHR30031">
    <property type="entry name" value="PHOSPHOENOLPYRUVATE CARBOXYKINASE ATP"/>
    <property type="match status" value="1"/>
</dbReference>
<dbReference type="Pfam" id="PF01293">
    <property type="entry name" value="PEPCK_ATP"/>
    <property type="match status" value="1"/>
</dbReference>
<dbReference type="PIRSF" id="PIRSF006294">
    <property type="entry name" value="PEP_crbxkin"/>
    <property type="match status" value="1"/>
</dbReference>
<dbReference type="SUPFAM" id="SSF68923">
    <property type="entry name" value="PEP carboxykinase N-terminal domain"/>
    <property type="match status" value="1"/>
</dbReference>
<dbReference type="SUPFAM" id="SSF53795">
    <property type="entry name" value="PEP carboxykinase-like"/>
    <property type="match status" value="1"/>
</dbReference>
<dbReference type="PROSITE" id="PS00532">
    <property type="entry name" value="PEPCK_ATP"/>
    <property type="match status" value="1"/>
</dbReference>
<proteinExistence type="inferred from homology"/>
<gene>
    <name evidence="1" type="primary">pckA</name>
    <name type="ordered locus">SAUSA300_1731</name>
</gene>
<evidence type="ECO:0000255" key="1">
    <source>
        <dbReference type="HAMAP-Rule" id="MF_00453"/>
    </source>
</evidence>
<feature type="chain" id="PRO_0000236949" description="Phosphoenolpyruvate carboxykinase (ATP)">
    <location>
        <begin position="1"/>
        <end position="530"/>
    </location>
</feature>
<feature type="binding site" evidence="1">
    <location>
        <position position="58"/>
    </location>
    <ligand>
        <name>substrate</name>
    </ligand>
</feature>
<feature type="binding site" evidence="1">
    <location>
        <position position="195"/>
    </location>
    <ligand>
        <name>substrate</name>
    </ligand>
</feature>
<feature type="binding site" evidence="1">
    <location>
        <position position="201"/>
    </location>
    <ligand>
        <name>ATP</name>
        <dbReference type="ChEBI" id="CHEBI:30616"/>
    </ligand>
</feature>
<feature type="binding site" evidence="1">
    <location>
        <position position="201"/>
    </location>
    <ligand>
        <name>Mn(2+)</name>
        <dbReference type="ChEBI" id="CHEBI:29035"/>
    </ligand>
</feature>
<feature type="binding site" evidence="1">
    <location>
        <position position="201"/>
    </location>
    <ligand>
        <name>substrate</name>
    </ligand>
</feature>
<feature type="binding site" evidence="1">
    <location>
        <position position="220"/>
    </location>
    <ligand>
        <name>ATP</name>
        <dbReference type="ChEBI" id="CHEBI:30616"/>
    </ligand>
</feature>
<feature type="binding site" evidence="1">
    <location>
        <position position="220"/>
    </location>
    <ligand>
        <name>Mn(2+)</name>
        <dbReference type="ChEBI" id="CHEBI:29035"/>
    </ligand>
</feature>
<feature type="binding site" evidence="1">
    <location>
        <begin position="236"/>
        <end position="244"/>
    </location>
    <ligand>
        <name>ATP</name>
        <dbReference type="ChEBI" id="CHEBI:30616"/>
    </ligand>
</feature>
<feature type="binding site" evidence="1">
    <location>
        <position position="257"/>
    </location>
    <ligand>
        <name>Mn(2+)</name>
        <dbReference type="ChEBI" id="CHEBI:29035"/>
    </ligand>
</feature>
<feature type="binding site" evidence="1">
    <location>
        <position position="285"/>
    </location>
    <ligand>
        <name>ATP</name>
        <dbReference type="ChEBI" id="CHEBI:30616"/>
    </ligand>
</feature>
<feature type="binding site" evidence="1">
    <location>
        <position position="321"/>
    </location>
    <ligand>
        <name>ATP</name>
        <dbReference type="ChEBI" id="CHEBI:30616"/>
    </ligand>
</feature>
<feature type="binding site" evidence="1">
    <location>
        <position position="321"/>
    </location>
    <ligand>
        <name>substrate</name>
    </ligand>
</feature>
<feature type="binding site" evidence="1">
    <location>
        <begin position="440"/>
        <end position="441"/>
    </location>
    <ligand>
        <name>ATP</name>
        <dbReference type="ChEBI" id="CHEBI:30616"/>
    </ligand>
</feature>
<feature type="binding site" evidence="1">
    <location>
        <position position="446"/>
    </location>
    <ligand>
        <name>ATP</name>
        <dbReference type="ChEBI" id="CHEBI:30616"/>
    </ligand>
</feature>
<sequence length="530" mass="59377">MSVDTYTETTKIDKLLKKPTSHFQLSTTQLYNKILDNNEGVLTELGAVNASTGKYTGRSPKDKFFVSEPSYRDNIDWGEINQPIDEETFLKLYHKVLDYLDKKDELYVFKGYAGSDKDTMLKLTVINELAWHNLFAKNMFIRPESKEEATKIKPNFTIVSAPHFKADPEVDGTKSETFVIISFKHKVILIGGTEYAGEMKKGIFSVMNYLLPMQDIMSMHCSANVGEKGDVALFFGLSGTGKTTLSADPHRKLIGDDEHGWNKNGVFNIEGGCYAKAINLSKEKEPQIFDAIKYGAILENTVVAEDGSVDFEDNRYTENTRAAYPINHIDNIVVPSKAAHPNTIIFLTADAFGVIPPISKLNKDQAMYHFLSGFTSKLAGTERGVTEPEPSFSTCFGAPFFPLHPTVYADLLGELIDLHDVDVYLVNTGWTGGKYGVGRRISLHYTRQMVNQAISGKLKNAEYTKDSTFGLSIPVEIEDVPKTILNPINAWSDKEKYKAQAEDLIQRFEKNFEKFGEKVEHIAEKGSFNK</sequence>
<name>PCKA_STAA3</name>
<protein>
    <recommendedName>
        <fullName evidence="1">Phosphoenolpyruvate carboxykinase (ATP)</fullName>
        <shortName evidence="1">PCK</shortName>
        <shortName evidence="1">PEP carboxykinase</shortName>
        <shortName evidence="1">PEPCK</shortName>
        <ecNumber evidence="1">4.1.1.49</ecNumber>
    </recommendedName>
</protein>
<organism>
    <name type="scientific">Staphylococcus aureus (strain USA300)</name>
    <dbReference type="NCBI Taxonomy" id="367830"/>
    <lineage>
        <taxon>Bacteria</taxon>
        <taxon>Bacillati</taxon>
        <taxon>Bacillota</taxon>
        <taxon>Bacilli</taxon>
        <taxon>Bacillales</taxon>
        <taxon>Staphylococcaceae</taxon>
        <taxon>Staphylococcus</taxon>
    </lineage>
</organism>
<reference key="1">
    <citation type="journal article" date="2006" name="Lancet">
        <title>Complete genome sequence of USA300, an epidemic clone of community-acquired meticillin-resistant Staphylococcus aureus.</title>
        <authorList>
            <person name="Diep B.A."/>
            <person name="Gill S.R."/>
            <person name="Chang R.F."/>
            <person name="Phan T.H."/>
            <person name="Chen J.H."/>
            <person name="Davidson M.G."/>
            <person name="Lin F."/>
            <person name="Lin J."/>
            <person name="Carleton H.A."/>
            <person name="Mongodin E.F."/>
            <person name="Sensabaugh G.F."/>
            <person name="Perdreau-Remington F."/>
        </authorList>
    </citation>
    <scope>NUCLEOTIDE SEQUENCE [LARGE SCALE GENOMIC DNA]</scope>
    <source>
        <strain>USA300</strain>
    </source>
</reference>
<accession>Q2FFV5</accession>